<name>RL28_STRP1</name>
<organism>
    <name type="scientific">Streptococcus pyogenes serotype M1</name>
    <dbReference type="NCBI Taxonomy" id="301447"/>
    <lineage>
        <taxon>Bacteria</taxon>
        <taxon>Bacillati</taxon>
        <taxon>Bacillota</taxon>
        <taxon>Bacilli</taxon>
        <taxon>Lactobacillales</taxon>
        <taxon>Streptococcaceae</taxon>
        <taxon>Streptococcus</taxon>
    </lineage>
</organism>
<gene>
    <name type="primary">rpmB</name>
    <name type="synonym">rl28</name>
    <name type="ordered locus">SPy_1888</name>
    <name type="ordered locus">M5005_Spy1606</name>
</gene>
<accession>P66157</accession>
<accession>P58087</accession>
<accession>Q48WQ1</accession>
<proteinExistence type="inferred from homology"/>
<feature type="chain" id="PRO_0000178565" description="Large ribosomal subunit protein bL28">
    <location>
        <begin position="1"/>
        <end position="62"/>
    </location>
</feature>
<keyword id="KW-1185">Reference proteome</keyword>
<keyword id="KW-0687">Ribonucleoprotein</keyword>
<keyword id="KW-0689">Ribosomal protein</keyword>
<protein>
    <recommendedName>
        <fullName evidence="1">Large ribosomal subunit protein bL28</fullName>
    </recommendedName>
    <alternativeName>
        <fullName>50S ribosomal protein L28</fullName>
    </alternativeName>
</protein>
<reference key="1">
    <citation type="journal article" date="2001" name="Proc. Natl. Acad. Sci. U.S.A.">
        <title>Complete genome sequence of an M1 strain of Streptococcus pyogenes.</title>
        <authorList>
            <person name="Ferretti J.J."/>
            <person name="McShan W.M."/>
            <person name="Ajdic D.J."/>
            <person name="Savic D.J."/>
            <person name="Savic G."/>
            <person name="Lyon K."/>
            <person name="Primeaux C."/>
            <person name="Sezate S."/>
            <person name="Suvorov A.N."/>
            <person name="Kenton S."/>
            <person name="Lai H.S."/>
            <person name="Lin S.P."/>
            <person name="Qian Y."/>
            <person name="Jia H.G."/>
            <person name="Najar F.Z."/>
            <person name="Ren Q."/>
            <person name="Zhu H."/>
            <person name="Song L."/>
            <person name="White J."/>
            <person name="Yuan X."/>
            <person name="Clifton S.W."/>
            <person name="Roe B.A."/>
            <person name="McLaughlin R.E."/>
        </authorList>
    </citation>
    <scope>NUCLEOTIDE SEQUENCE [LARGE SCALE GENOMIC DNA]</scope>
    <source>
        <strain>ATCC 700294 / SF370 / Serotype M1</strain>
    </source>
</reference>
<reference key="2">
    <citation type="journal article" date="2005" name="J. Infect. Dis.">
        <title>Evolutionary origin and emergence of a highly successful clone of serotype M1 group A Streptococcus involved multiple horizontal gene transfer events.</title>
        <authorList>
            <person name="Sumby P."/>
            <person name="Porcella S.F."/>
            <person name="Madrigal A.G."/>
            <person name="Barbian K.D."/>
            <person name="Virtaneva K."/>
            <person name="Ricklefs S.M."/>
            <person name="Sturdevant D.E."/>
            <person name="Graham M.R."/>
            <person name="Vuopio-Varkila J."/>
            <person name="Hoe N.P."/>
            <person name="Musser J.M."/>
        </authorList>
    </citation>
    <scope>NUCLEOTIDE SEQUENCE [LARGE SCALE GENOMIC DNA]</scope>
    <source>
        <strain>ATCC BAA-947 / MGAS5005 / Serotype M1</strain>
    </source>
</reference>
<dbReference type="EMBL" id="AE004092">
    <property type="protein sequence ID" value="AAK34599.1"/>
    <property type="molecule type" value="Genomic_DNA"/>
</dbReference>
<dbReference type="EMBL" id="CP000017">
    <property type="protein sequence ID" value="AAZ52224.1"/>
    <property type="molecule type" value="Genomic_DNA"/>
</dbReference>
<dbReference type="RefSeq" id="NP_269878.1">
    <property type="nucleotide sequence ID" value="NC_002737.2"/>
</dbReference>
<dbReference type="SMR" id="P66157"/>
<dbReference type="PaxDb" id="1314-HKU360_01724"/>
<dbReference type="KEGG" id="spy:SPy_1888"/>
<dbReference type="KEGG" id="spz:M5005_Spy1606"/>
<dbReference type="PATRIC" id="fig|160490.10.peg.1638"/>
<dbReference type="HOGENOM" id="CLU_064548_7_1_9"/>
<dbReference type="OMA" id="VQKVRIM"/>
<dbReference type="PRO" id="PR:P66157"/>
<dbReference type="Proteomes" id="UP000000750">
    <property type="component" value="Chromosome"/>
</dbReference>
<dbReference type="GO" id="GO:1990904">
    <property type="term" value="C:ribonucleoprotein complex"/>
    <property type="evidence" value="ECO:0007669"/>
    <property type="project" value="UniProtKB-KW"/>
</dbReference>
<dbReference type="GO" id="GO:0005840">
    <property type="term" value="C:ribosome"/>
    <property type="evidence" value="ECO:0007669"/>
    <property type="project" value="UniProtKB-KW"/>
</dbReference>
<dbReference type="GO" id="GO:0003735">
    <property type="term" value="F:structural constituent of ribosome"/>
    <property type="evidence" value="ECO:0007669"/>
    <property type="project" value="InterPro"/>
</dbReference>
<dbReference type="GO" id="GO:0006412">
    <property type="term" value="P:translation"/>
    <property type="evidence" value="ECO:0007669"/>
    <property type="project" value="UniProtKB-UniRule"/>
</dbReference>
<dbReference type="Gene3D" id="2.30.170.40">
    <property type="entry name" value="Ribosomal protein L28/L24"/>
    <property type="match status" value="1"/>
</dbReference>
<dbReference type="HAMAP" id="MF_00373">
    <property type="entry name" value="Ribosomal_bL28"/>
    <property type="match status" value="1"/>
</dbReference>
<dbReference type="InterPro" id="IPR050096">
    <property type="entry name" value="Bacterial_rp_bL28"/>
</dbReference>
<dbReference type="InterPro" id="IPR026569">
    <property type="entry name" value="Ribosomal_bL28"/>
</dbReference>
<dbReference type="InterPro" id="IPR034704">
    <property type="entry name" value="Ribosomal_bL28/bL31-like_sf"/>
</dbReference>
<dbReference type="InterPro" id="IPR001383">
    <property type="entry name" value="Ribosomal_bL28_bact-type"/>
</dbReference>
<dbReference type="InterPro" id="IPR037147">
    <property type="entry name" value="Ribosomal_bL28_sf"/>
</dbReference>
<dbReference type="NCBIfam" id="TIGR00009">
    <property type="entry name" value="L28"/>
    <property type="match status" value="1"/>
</dbReference>
<dbReference type="PANTHER" id="PTHR39080">
    <property type="entry name" value="50S RIBOSOMAL PROTEIN L28"/>
    <property type="match status" value="1"/>
</dbReference>
<dbReference type="PANTHER" id="PTHR39080:SF1">
    <property type="entry name" value="LARGE RIBOSOMAL SUBUNIT PROTEIN BL28A"/>
    <property type="match status" value="1"/>
</dbReference>
<dbReference type="Pfam" id="PF00830">
    <property type="entry name" value="Ribosomal_L28"/>
    <property type="match status" value="1"/>
</dbReference>
<dbReference type="SUPFAM" id="SSF143800">
    <property type="entry name" value="L28p-like"/>
    <property type="match status" value="1"/>
</dbReference>
<comment type="similarity">
    <text evidence="1">Belongs to the bacterial ribosomal protein bL28 family.</text>
</comment>
<evidence type="ECO:0000305" key="1"/>
<sequence length="62" mass="6928">MAKVCYFTGRKTVSGNNRSHAMNQTKRTVKPNLQKVTILVDGKPKKVWASARALKSGKVERI</sequence>